<feature type="chain" id="PRO_0000422593" description="GalNAc(5)-diNAcBac-PP-undecaprenol beta-1,3-glucosyltransferase">
    <location>
        <begin position="1"/>
        <end position="309"/>
    </location>
</feature>
<feature type="transmembrane region" description="Helical" evidence="1">
    <location>
        <begin position="273"/>
        <end position="291"/>
    </location>
</feature>
<name>PGLI_CAMJE</name>
<keyword id="KW-0328">Glycosyltransferase</keyword>
<keyword id="KW-0472">Membrane</keyword>
<keyword id="KW-1185">Reference proteome</keyword>
<keyword id="KW-0808">Transferase</keyword>
<keyword id="KW-0812">Transmembrane</keyword>
<keyword id="KW-1133">Transmembrane helix</keyword>
<evidence type="ECO:0000255" key="1"/>
<evidence type="ECO:0000269" key="2">
    <source>
    </source>
</evidence>
<evidence type="ECO:0000269" key="3">
    <source>
    </source>
</evidence>
<evidence type="ECO:0000305" key="4"/>
<evidence type="ECO:0000305" key="5">
    <source>
    </source>
</evidence>
<sequence length="309" mass="35511">MPKLSVIVPTFNRQVLLEKAIKSIQNQDFKDLEIIVSDDNSSDDTKSVVQNLQKDDDRIKYFLNQNYKQGPNGNKNNGLDQASGEFVTFLDDDDELLSGALSTLMQKANEGYAHVFGNCLIEKEGNLSKEFSGKGLEKDSEISKKDFLMAKFSGEFFSVFKKSLLENKRFNEEFYGNEATLWVNLYKEKSFYIHKAFRIYRIFRQDSVTLGASKNAYRVYLGYLELAKILENELRMSKDKDYKKTCASYYKMAAYYAKLAKNYKALYKCLFKSLSIKINAPALILLILSIIPNNMIEKLSKIRVALCKN</sequence>
<comment type="function">
    <text evidence="2 3">Glucosyltransferase that adds he final branching glucose to complete the final heptasaccharide structure in the N-linked protein glycosylation pathway.</text>
</comment>
<comment type="catalytic activity">
    <reaction evidence="2">
        <text>[alpha-D-GalNAc-(1-&gt;4)]4-alpha-D-GalNAc-(1-&gt;3)-alpha-D-diNAcBac-tri-trans,hepta-cis-undecaprenyl diphosphate + UDP-alpha-D-glucose = [alpha-D-GalNAc-(1-&gt;4)]2-[beta-D-Glc-(1-&gt;3)]-[alpha-D-GalNAc-(1-&gt;4)]2-alpha-D-GalNAc-(1-&gt;3)-alpha-D-diNAcBac-tri-trans,hepta-cis-undecaprenyl diphosphate + UDP + H(+)</text>
        <dbReference type="Rhea" id="RHEA:34523"/>
        <dbReference type="ChEBI" id="CHEBI:15378"/>
        <dbReference type="ChEBI" id="CHEBI:58223"/>
        <dbReference type="ChEBI" id="CHEBI:58885"/>
        <dbReference type="ChEBI" id="CHEBI:68653"/>
        <dbReference type="ChEBI" id="CHEBI:68654"/>
        <dbReference type="EC" id="2.4.1.293"/>
    </reaction>
</comment>
<comment type="pathway">
    <text evidence="2">Protein modification; protein glycosylation.</text>
</comment>
<comment type="subcellular location">
    <subcellularLocation>
        <location evidence="4">Membrane</location>
        <topology evidence="4">Single-pass membrane protein</topology>
    </subcellularLocation>
</comment>
<comment type="disruption phenotype">
    <text evidence="3">Loss of the glucose branch in N-glycans. N-glycans however contain the entire 6-mer, demonstrating that Glc plays no role in determining the length of the GalNAc backbone. Cells show levels of colonization of chick cells similar to those of the wild type.</text>
</comment>
<comment type="miscellaneous">
    <text evidence="5">N-linked protein glycosylation in C.jejuni consists in the transfer of a heptasaccharide (GalNAc-alpha1,4-GalNAc-alpha1,4-(Glcbeta1,3)-GalNAc-alpha1,4-GalNAc-alpha1,4-GalNAc-alpha1,3-bacillosamine) from a membrane-anchored undecaprenylpyrophosphate (Und-PP)-linked donor to the Asn side chain of proteins at the Asn-X-Ser/Thr motif.</text>
</comment>
<comment type="similarity">
    <text evidence="4">Belongs to the glycosyltransferase 2 family.</text>
</comment>
<reference key="1">
    <citation type="journal article" date="2000" name="Nature">
        <title>The genome sequence of the food-borne pathogen Campylobacter jejuni reveals hypervariable sequences.</title>
        <authorList>
            <person name="Parkhill J."/>
            <person name="Wren B.W."/>
            <person name="Mungall K.L."/>
            <person name="Ketley J.M."/>
            <person name="Churcher C.M."/>
            <person name="Basham D."/>
            <person name="Chillingworth T."/>
            <person name="Davies R.M."/>
            <person name="Feltwell T."/>
            <person name="Holroyd S."/>
            <person name="Jagels K."/>
            <person name="Karlyshev A.V."/>
            <person name="Moule S."/>
            <person name="Pallen M.J."/>
            <person name="Penn C.W."/>
            <person name="Quail M.A."/>
            <person name="Rajandream M.A."/>
            <person name="Rutherford K.M."/>
            <person name="van Vliet A.H.M."/>
            <person name="Whitehead S."/>
            <person name="Barrell B.G."/>
        </authorList>
    </citation>
    <scope>NUCLEOTIDE SEQUENCE [LARGE SCALE GENOMIC DNA]</scope>
    <source>
        <strain>ATCC 700819 / NCTC 11168</strain>
    </source>
</reference>
<reference key="2">
    <citation type="journal article" date="2005" name="Proc. Natl. Acad. Sci. U.S.A.">
        <title>In vitro assembly of the undecaprenylpyrophosphate-linked heptasaccharide for prokaryotic N-linked glycosylation.</title>
        <authorList>
            <person name="Glover K.J."/>
            <person name="Weerapana E."/>
            <person name="Imperiali B."/>
        </authorList>
    </citation>
    <scope>FUNCTION</scope>
    <scope>CATALYTIC ACTIVITY</scope>
    <scope>PATHWAY</scope>
    <source>
        <strain>ATCC 700819 / NCTC 11168</strain>
    </source>
</reference>
<reference key="3">
    <citation type="journal article" date="2006" name="J. Bacteriol.">
        <title>Biosynthesis of the N-linked glycan in Campylobacter jejuni and addition onto protein through block transfer.</title>
        <authorList>
            <person name="Kelly J."/>
            <person name="Jarrell H."/>
            <person name="Millar L."/>
            <person name="Tessier L."/>
            <person name="Fiori L.M."/>
            <person name="Lau P.C."/>
            <person name="Allan B."/>
            <person name="Szymanski C.M."/>
        </authorList>
    </citation>
    <scope>FUNCTION</scope>
    <scope>DISRUPTION PHENOTYPE</scope>
    <source>
        <strain>ATCC 700819 / NCTC 11168</strain>
    </source>
</reference>
<protein>
    <recommendedName>
        <fullName>GalNAc(5)-diNAcBac-PP-undecaprenol beta-1,3-glucosyltransferase</fullName>
        <ecNumber>2.4.1.293</ecNumber>
    </recommendedName>
    <alternativeName>
        <fullName>Protein glycosylation I</fullName>
    </alternativeName>
</protein>
<organism>
    <name type="scientific">Campylobacter jejuni subsp. jejuni serotype O:2 (strain ATCC 700819 / NCTC 11168)</name>
    <dbReference type="NCBI Taxonomy" id="192222"/>
    <lineage>
        <taxon>Bacteria</taxon>
        <taxon>Pseudomonadati</taxon>
        <taxon>Campylobacterota</taxon>
        <taxon>Epsilonproteobacteria</taxon>
        <taxon>Campylobacterales</taxon>
        <taxon>Campylobacteraceae</taxon>
        <taxon>Campylobacter</taxon>
    </lineage>
</organism>
<proteinExistence type="evidence at protein level"/>
<accession>Q0P9C6</accession>
<gene>
    <name type="primary">pglI</name>
    <name type="ordered locus">Cj1128c</name>
</gene>
<dbReference type="EC" id="2.4.1.293"/>
<dbReference type="EMBL" id="AL111168">
    <property type="protein sequence ID" value="CAL35245.1"/>
    <property type="molecule type" value="Genomic_DNA"/>
</dbReference>
<dbReference type="PIR" id="C81317">
    <property type="entry name" value="C81317"/>
</dbReference>
<dbReference type="RefSeq" id="WP_002852770.1">
    <property type="nucleotide sequence ID" value="NZ_SZUC01000001.1"/>
</dbReference>
<dbReference type="RefSeq" id="YP_002344521.1">
    <property type="nucleotide sequence ID" value="NC_002163.1"/>
</dbReference>
<dbReference type="SMR" id="Q0P9C6"/>
<dbReference type="IntAct" id="Q0P9C6">
    <property type="interactions" value="2"/>
</dbReference>
<dbReference type="STRING" id="192222.Cj1128c"/>
<dbReference type="CAZy" id="GT2">
    <property type="family name" value="Glycosyltransferase Family 2"/>
</dbReference>
<dbReference type="PaxDb" id="192222-Cj1128c"/>
<dbReference type="EnsemblBacteria" id="CAL35245">
    <property type="protein sequence ID" value="CAL35245"/>
    <property type="gene ID" value="Cj1128c"/>
</dbReference>
<dbReference type="GeneID" id="905419"/>
<dbReference type="KEGG" id="cje:Cj1128c"/>
<dbReference type="PATRIC" id="fig|192222.6.peg.1110"/>
<dbReference type="eggNOG" id="COG1215">
    <property type="taxonomic scope" value="Bacteria"/>
</dbReference>
<dbReference type="HOGENOM" id="CLU_025996_14_0_7"/>
<dbReference type="OrthoDB" id="5291101at2"/>
<dbReference type="BioCyc" id="MetaCyc:MONOMER-17334"/>
<dbReference type="UniPathway" id="UPA00378"/>
<dbReference type="Proteomes" id="UP000000799">
    <property type="component" value="Chromosome"/>
</dbReference>
<dbReference type="GO" id="GO:0016020">
    <property type="term" value="C:membrane"/>
    <property type="evidence" value="ECO:0007669"/>
    <property type="project" value="UniProtKB-SubCell"/>
</dbReference>
<dbReference type="GO" id="GO:0046527">
    <property type="term" value="F:glucosyltransferase activity"/>
    <property type="evidence" value="ECO:0000314"/>
    <property type="project" value="UniProtKB"/>
</dbReference>
<dbReference type="GO" id="GO:0018279">
    <property type="term" value="P:protein N-linked glycosylation via asparagine"/>
    <property type="evidence" value="ECO:0000314"/>
    <property type="project" value="UniProtKB"/>
</dbReference>
<dbReference type="CDD" id="cd00761">
    <property type="entry name" value="Glyco_tranf_GTA_type"/>
    <property type="match status" value="1"/>
</dbReference>
<dbReference type="Gene3D" id="3.90.550.10">
    <property type="entry name" value="Spore Coat Polysaccharide Biosynthesis Protein SpsA, Chain A"/>
    <property type="match status" value="1"/>
</dbReference>
<dbReference type="InterPro" id="IPR001173">
    <property type="entry name" value="Glyco_trans_2-like"/>
</dbReference>
<dbReference type="InterPro" id="IPR029044">
    <property type="entry name" value="Nucleotide-diphossugar_trans"/>
</dbReference>
<dbReference type="PANTHER" id="PTHR22916">
    <property type="entry name" value="GLYCOSYLTRANSFERASE"/>
    <property type="match status" value="1"/>
</dbReference>
<dbReference type="PANTHER" id="PTHR22916:SF3">
    <property type="entry name" value="UDP-GLCNAC:BETAGAL BETA-1,3-N-ACETYLGLUCOSAMINYLTRANSFERASE-LIKE PROTEIN 1"/>
    <property type="match status" value="1"/>
</dbReference>
<dbReference type="Pfam" id="PF00535">
    <property type="entry name" value="Glycos_transf_2"/>
    <property type="match status" value="1"/>
</dbReference>
<dbReference type="SUPFAM" id="SSF53448">
    <property type="entry name" value="Nucleotide-diphospho-sugar transferases"/>
    <property type="match status" value="1"/>
</dbReference>